<keyword id="KW-0521">NADP</keyword>
<keyword id="KW-0560">Oxidoreductase</keyword>
<keyword id="KW-0627">Porphyrin biosynthesis</keyword>
<protein>
    <recommendedName>
        <fullName evidence="1">Glutamyl-tRNA reductase</fullName>
        <shortName evidence="1">GluTR</shortName>
        <ecNumber evidence="1">1.2.1.70</ecNumber>
    </recommendedName>
</protein>
<accession>A4IRG7</accession>
<organism>
    <name type="scientific">Geobacillus thermodenitrificans (strain NG80-2)</name>
    <dbReference type="NCBI Taxonomy" id="420246"/>
    <lineage>
        <taxon>Bacteria</taxon>
        <taxon>Bacillati</taxon>
        <taxon>Bacillota</taxon>
        <taxon>Bacilli</taxon>
        <taxon>Bacillales</taxon>
        <taxon>Anoxybacillaceae</taxon>
        <taxon>Geobacillus</taxon>
    </lineage>
</organism>
<gene>
    <name evidence="1" type="primary">hemA</name>
    <name type="ordered locus">GTNG_2576</name>
</gene>
<proteinExistence type="inferred from homology"/>
<reference key="1">
    <citation type="journal article" date="2007" name="Proc. Natl. Acad. Sci. U.S.A.">
        <title>Genome and proteome of long-chain alkane degrading Geobacillus thermodenitrificans NG80-2 isolated from a deep-subsurface oil reservoir.</title>
        <authorList>
            <person name="Feng L."/>
            <person name="Wang W."/>
            <person name="Cheng J."/>
            <person name="Ren Y."/>
            <person name="Zhao G."/>
            <person name="Gao C."/>
            <person name="Tang Y."/>
            <person name="Liu X."/>
            <person name="Han W."/>
            <person name="Peng X."/>
            <person name="Liu R."/>
            <person name="Wang L."/>
        </authorList>
    </citation>
    <scope>NUCLEOTIDE SEQUENCE [LARGE SCALE GENOMIC DNA]</scope>
    <source>
        <strain>NG80-2</strain>
    </source>
</reference>
<sequence length="455" mass="49772">MQIIVVGVNYKTAPVEIREKLAFGEAELGEAMKQLAKQKSILENVIVSTCNRTEIYAVVDQLHTGRYYIKAFLAEWFDIEAEAIAPYLRVLEGEAAAGHLFRVAAGLDSMVLGETQILGQVKGSYLLAQEIGTSGTILNHLFKQAVTFAKRAHSETGIGAHAVSVSYAAVELAKKIFGHLNGKHVLIIGAGKMGTLAAQNLYGNGVGKVTVVNRTLEKAKQLAAQFDGEAKSLGELSCALLEADIVISSTGAKGYMLTKEEMAPLEKMRKGRPLFMVDIAVPRDLDPALAELETVFLYDIDDLQDVVAANLAERQKAAALIEEMIEGELVAFGQWLQTLGVVPVIAALREKALAIQAETMKSLERKLPHLSERDRKVLNKHTKSIINQLLRDPILQVKELAAGPNADEALQLFMKIFNIEDAVKAEQRSAQRAEVQLRDEQQAEAVRAARPSWQL</sequence>
<dbReference type="EC" id="1.2.1.70" evidence="1"/>
<dbReference type="EMBL" id="CP000557">
    <property type="protein sequence ID" value="ABO67921.1"/>
    <property type="molecule type" value="Genomic_DNA"/>
</dbReference>
<dbReference type="RefSeq" id="WP_011887920.1">
    <property type="nucleotide sequence ID" value="NC_009328.1"/>
</dbReference>
<dbReference type="SMR" id="A4IRG7"/>
<dbReference type="GeneID" id="87623276"/>
<dbReference type="KEGG" id="gtn:GTNG_2576"/>
<dbReference type="eggNOG" id="COG0373">
    <property type="taxonomic scope" value="Bacteria"/>
</dbReference>
<dbReference type="HOGENOM" id="CLU_035113_2_2_9"/>
<dbReference type="UniPathway" id="UPA00251">
    <property type="reaction ID" value="UER00316"/>
</dbReference>
<dbReference type="Proteomes" id="UP000001578">
    <property type="component" value="Chromosome"/>
</dbReference>
<dbReference type="GO" id="GO:0008883">
    <property type="term" value="F:glutamyl-tRNA reductase activity"/>
    <property type="evidence" value="ECO:0007669"/>
    <property type="project" value="UniProtKB-UniRule"/>
</dbReference>
<dbReference type="GO" id="GO:0050661">
    <property type="term" value="F:NADP binding"/>
    <property type="evidence" value="ECO:0007669"/>
    <property type="project" value="InterPro"/>
</dbReference>
<dbReference type="GO" id="GO:0019353">
    <property type="term" value="P:protoporphyrinogen IX biosynthetic process from glutamate"/>
    <property type="evidence" value="ECO:0007669"/>
    <property type="project" value="TreeGrafter"/>
</dbReference>
<dbReference type="CDD" id="cd05213">
    <property type="entry name" value="NAD_bind_Glutamyl_tRNA_reduct"/>
    <property type="match status" value="1"/>
</dbReference>
<dbReference type="FunFam" id="3.30.460.30:FF:000001">
    <property type="entry name" value="Glutamyl-tRNA reductase"/>
    <property type="match status" value="1"/>
</dbReference>
<dbReference type="FunFam" id="3.40.50.720:FF:000031">
    <property type="entry name" value="Glutamyl-tRNA reductase"/>
    <property type="match status" value="1"/>
</dbReference>
<dbReference type="Gene3D" id="3.30.460.30">
    <property type="entry name" value="Glutamyl-tRNA reductase, N-terminal domain"/>
    <property type="match status" value="1"/>
</dbReference>
<dbReference type="Gene3D" id="3.40.50.720">
    <property type="entry name" value="NAD(P)-binding Rossmann-like Domain"/>
    <property type="match status" value="1"/>
</dbReference>
<dbReference type="HAMAP" id="MF_00087">
    <property type="entry name" value="Glu_tRNA_reductase"/>
    <property type="match status" value="1"/>
</dbReference>
<dbReference type="InterPro" id="IPR000343">
    <property type="entry name" value="4pyrrol_synth_GluRdtase"/>
</dbReference>
<dbReference type="InterPro" id="IPR015896">
    <property type="entry name" value="4pyrrol_synth_GluRdtase_dimer"/>
</dbReference>
<dbReference type="InterPro" id="IPR015895">
    <property type="entry name" value="4pyrrol_synth_GluRdtase_N"/>
</dbReference>
<dbReference type="InterPro" id="IPR018214">
    <property type="entry name" value="GluRdtase_CS"/>
</dbReference>
<dbReference type="InterPro" id="IPR036453">
    <property type="entry name" value="GluRdtase_dimer_dom_sf"/>
</dbReference>
<dbReference type="InterPro" id="IPR036343">
    <property type="entry name" value="GluRdtase_N_sf"/>
</dbReference>
<dbReference type="InterPro" id="IPR036291">
    <property type="entry name" value="NAD(P)-bd_dom_sf"/>
</dbReference>
<dbReference type="InterPro" id="IPR006151">
    <property type="entry name" value="Shikm_DH/Glu-tRNA_Rdtase"/>
</dbReference>
<dbReference type="NCBIfam" id="TIGR01035">
    <property type="entry name" value="hemA"/>
    <property type="match status" value="1"/>
</dbReference>
<dbReference type="NCBIfam" id="NF000744">
    <property type="entry name" value="PRK00045.1-3"/>
    <property type="match status" value="1"/>
</dbReference>
<dbReference type="PANTHER" id="PTHR43013">
    <property type="entry name" value="GLUTAMYL-TRNA REDUCTASE"/>
    <property type="match status" value="1"/>
</dbReference>
<dbReference type="PANTHER" id="PTHR43013:SF1">
    <property type="entry name" value="GLUTAMYL-TRNA REDUCTASE"/>
    <property type="match status" value="1"/>
</dbReference>
<dbReference type="Pfam" id="PF00745">
    <property type="entry name" value="GlutR_dimer"/>
    <property type="match status" value="1"/>
</dbReference>
<dbReference type="Pfam" id="PF05201">
    <property type="entry name" value="GlutR_N"/>
    <property type="match status" value="1"/>
</dbReference>
<dbReference type="Pfam" id="PF01488">
    <property type="entry name" value="Shikimate_DH"/>
    <property type="match status" value="1"/>
</dbReference>
<dbReference type="PIRSF" id="PIRSF000445">
    <property type="entry name" value="4pyrrol_synth_GluRdtase"/>
    <property type="match status" value="1"/>
</dbReference>
<dbReference type="SUPFAM" id="SSF69742">
    <property type="entry name" value="Glutamyl tRNA-reductase catalytic, N-terminal domain"/>
    <property type="match status" value="1"/>
</dbReference>
<dbReference type="SUPFAM" id="SSF69075">
    <property type="entry name" value="Glutamyl tRNA-reductase dimerization domain"/>
    <property type="match status" value="1"/>
</dbReference>
<dbReference type="SUPFAM" id="SSF51735">
    <property type="entry name" value="NAD(P)-binding Rossmann-fold domains"/>
    <property type="match status" value="1"/>
</dbReference>
<dbReference type="PROSITE" id="PS00747">
    <property type="entry name" value="GLUTR"/>
    <property type="match status" value="1"/>
</dbReference>
<evidence type="ECO:0000255" key="1">
    <source>
        <dbReference type="HAMAP-Rule" id="MF_00087"/>
    </source>
</evidence>
<name>HEM1_GEOTN</name>
<feature type="chain" id="PRO_0000335041" description="Glutamyl-tRNA reductase">
    <location>
        <begin position="1"/>
        <end position="455"/>
    </location>
</feature>
<feature type="active site" description="Nucleophile" evidence="1">
    <location>
        <position position="50"/>
    </location>
</feature>
<feature type="binding site" evidence="1">
    <location>
        <begin position="49"/>
        <end position="52"/>
    </location>
    <ligand>
        <name>substrate</name>
    </ligand>
</feature>
<feature type="binding site" evidence="1">
    <location>
        <position position="109"/>
    </location>
    <ligand>
        <name>substrate</name>
    </ligand>
</feature>
<feature type="binding site" evidence="1">
    <location>
        <begin position="114"/>
        <end position="116"/>
    </location>
    <ligand>
        <name>substrate</name>
    </ligand>
</feature>
<feature type="binding site" evidence="1">
    <location>
        <position position="120"/>
    </location>
    <ligand>
        <name>substrate</name>
    </ligand>
</feature>
<feature type="binding site" evidence="1">
    <location>
        <begin position="189"/>
        <end position="194"/>
    </location>
    <ligand>
        <name>NADP(+)</name>
        <dbReference type="ChEBI" id="CHEBI:58349"/>
    </ligand>
</feature>
<feature type="site" description="Important for activity" evidence="1">
    <location>
        <position position="99"/>
    </location>
</feature>
<comment type="function">
    <text evidence="1">Catalyzes the NADPH-dependent reduction of glutamyl-tRNA(Glu) to glutamate 1-semialdehyde (GSA).</text>
</comment>
<comment type="catalytic activity">
    <reaction evidence="1">
        <text>(S)-4-amino-5-oxopentanoate + tRNA(Glu) + NADP(+) = L-glutamyl-tRNA(Glu) + NADPH + H(+)</text>
        <dbReference type="Rhea" id="RHEA:12344"/>
        <dbReference type="Rhea" id="RHEA-COMP:9663"/>
        <dbReference type="Rhea" id="RHEA-COMP:9680"/>
        <dbReference type="ChEBI" id="CHEBI:15378"/>
        <dbReference type="ChEBI" id="CHEBI:57501"/>
        <dbReference type="ChEBI" id="CHEBI:57783"/>
        <dbReference type="ChEBI" id="CHEBI:58349"/>
        <dbReference type="ChEBI" id="CHEBI:78442"/>
        <dbReference type="ChEBI" id="CHEBI:78520"/>
        <dbReference type="EC" id="1.2.1.70"/>
    </reaction>
</comment>
<comment type="pathway">
    <text evidence="1">Porphyrin-containing compound metabolism; protoporphyrin-IX biosynthesis; 5-aminolevulinate from L-glutamyl-tRNA(Glu): step 1/2.</text>
</comment>
<comment type="subunit">
    <text evidence="1">Homodimer.</text>
</comment>
<comment type="domain">
    <text evidence="1">Possesses an unusual extended V-shaped dimeric structure with each monomer consisting of three distinct domains arranged along a curved 'spinal' alpha-helix. The N-terminal catalytic domain specifically recognizes the glutamate moiety of the substrate. The second domain is the NADPH-binding domain, and the third C-terminal domain is responsible for dimerization.</text>
</comment>
<comment type="miscellaneous">
    <text evidence="1">During catalysis, the active site Cys acts as a nucleophile attacking the alpha-carbonyl group of tRNA-bound glutamate with the formation of a thioester intermediate between enzyme and glutamate, and the concomitant release of tRNA(Glu). The thioester intermediate is finally reduced by direct hydride transfer from NADPH, to form the product GSA.</text>
</comment>
<comment type="similarity">
    <text evidence="1">Belongs to the glutamyl-tRNA reductase family.</text>
</comment>